<name>CBPA_SALEP</name>
<gene>
    <name evidence="1" type="primary">cbpA</name>
    <name type="ordered locus">SEN0976</name>
</gene>
<accession>B5R049</accession>
<comment type="function">
    <text evidence="1">DNA-binding protein that preferentially recognizes a curved DNA sequence. It is probably a functional analog of DnaJ; displays overlapping activities with DnaJ, but functions under different conditions, probably acting as a molecular chaperone in an adaptive response to environmental stresses other than heat shock. Lacks autonomous chaperone activity; binds native substrates and targets them for recognition by DnaK. Its activity is inhibited by the binding of CbpM.</text>
</comment>
<comment type="subcellular location">
    <subcellularLocation>
        <location evidence="1">Cytoplasm</location>
        <location evidence="1">Nucleoid</location>
    </subcellularLocation>
</comment>
<reference key="1">
    <citation type="journal article" date="2008" name="Genome Res.">
        <title>Comparative genome analysis of Salmonella enteritidis PT4 and Salmonella gallinarum 287/91 provides insights into evolutionary and host adaptation pathways.</title>
        <authorList>
            <person name="Thomson N.R."/>
            <person name="Clayton D.J."/>
            <person name="Windhorst D."/>
            <person name="Vernikos G."/>
            <person name="Davidson S."/>
            <person name="Churcher C."/>
            <person name="Quail M.A."/>
            <person name="Stevens M."/>
            <person name="Jones M.A."/>
            <person name="Watson M."/>
            <person name="Barron A."/>
            <person name="Layton A."/>
            <person name="Pickard D."/>
            <person name="Kingsley R.A."/>
            <person name="Bignell A."/>
            <person name="Clark L."/>
            <person name="Harris B."/>
            <person name="Ormond D."/>
            <person name="Abdellah Z."/>
            <person name="Brooks K."/>
            <person name="Cherevach I."/>
            <person name="Chillingworth T."/>
            <person name="Woodward J."/>
            <person name="Norberczak H."/>
            <person name="Lord A."/>
            <person name="Arrowsmith C."/>
            <person name="Jagels K."/>
            <person name="Moule S."/>
            <person name="Mungall K."/>
            <person name="Saunders M."/>
            <person name="Whitehead S."/>
            <person name="Chabalgoity J.A."/>
            <person name="Maskell D."/>
            <person name="Humphreys T."/>
            <person name="Roberts M."/>
            <person name="Barrow P.A."/>
            <person name="Dougan G."/>
            <person name="Parkhill J."/>
        </authorList>
    </citation>
    <scope>NUCLEOTIDE SEQUENCE [LARGE SCALE GENOMIC DNA]</scope>
    <source>
        <strain>P125109</strain>
    </source>
</reference>
<dbReference type="EMBL" id="AM933172">
    <property type="protein sequence ID" value="CAR32558.1"/>
    <property type="molecule type" value="Genomic_DNA"/>
</dbReference>
<dbReference type="RefSeq" id="WP_000420603.1">
    <property type="nucleotide sequence ID" value="NC_011294.1"/>
</dbReference>
<dbReference type="SMR" id="B5R049"/>
<dbReference type="KEGG" id="set:SEN0976"/>
<dbReference type="HOGENOM" id="CLU_017633_0_0_6"/>
<dbReference type="Proteomes" id="UP000000613">
    <property type="component" value="Chromosome"/>
</dbReference>
<dbReference type="GO" id="GO:0005737">
    <property type="term" value="C:cytoplasm"/>
    <property type="evidence" value="ECO:0007669"/>
    <property type="project" value="UniProtKB-UniRule"/>
</dbReference>
<dbReference type="GO" id="GO:0009295">
    <property type="term" value="C:nucleoid"/>
    <property type="evidence" value="ECO:0007669"/>
    <property type="project" value="UniProtKB-SubCell"/>
</dbReference>
<dbReference type="GO" id="GO:0003681">
    <property type="term" value="F:bent DNA binding"/>
    <property type="evidence" value="ECO:0007669"/>
    <property type="project" value="UniProtKB-UniRule"/>
</dbReference>
<dbReference type="GO" id="GO:0051082">
    <property type="term" value="F:unfolded protein binding"/>
    <property type="evidence" value="ECO:0007669"/>
    <property type="project" value="InterPro"/>
</dbReference>
<dbReference type="GO" id="GO:0051085">
    <property type="term" value="P:chaperone cofactor-dependent protein refolding"/>
    <property type="evidence" value="ECO:0007669"/>
    <property type="project" value="TreeGrafter"/>
</dbReference>
<dbReference type="GO" id="GO:0042026">
    <property type="term" value="P:protein refolding"/>
    <property type="evidence" value="ECO:0007669"/>
    <property type="project" value="TreeGrafter"/>
</dbReference>
<dbReference type="CDD" id="cd06257">
    <property type="entry name" value="DnaJ"/>
    <property type="match status" value="1"/>
</dbReference>
<dbReference type="CDD" id="cd10747">
    <property type="entry name" value="DnaJ_C"/>
    <property type="match status" value="1"/>
</dbReference>
<dbReference type="FunFam" id="1.10.287.110:FF:000013">
    <property type="entry name" value="Curved DNA-binding protein"/>
    <property type="match status" value="1"/>
</dbReference>
<dbReference type="FunFam" id="2.60.260.20:FF:000008">
    <property type="entry name" value="Curved DNA-binding protein"/>
    <property type="match status" value="1"/>
</dbReference>
<dbReference type="Gene3D" id="1.10.287.110">
    <property type="entry name" value="DnaJ domain"/>
    <property type="match status" value="1"/>
</dbReference>
<dbReference type="Gene3D" id="1.20.5.460">
    <property type="entry name" value="Single helix bin"/>
    <property type="match status" value="1"/>
</dbReference>
<dbReference type="Gene3D" id="2.60.260.20">
    <property type="entry name" value="Urease metallochaperone UreE, N-terminal domain"/>
    <property type="match status" value="2"/>
</dbReference>
<dbReference type="HAMAP" id="MF_01154">
    <property type="entry name" value="CbpA"/>
    <property type="match status" value="1"/>
</dbReference>
<dbReference type="InterPro" id="IPR023859">
    <property type="entry name" value="DNA-bd_curved-DNA"/>
</dbReference>
<dbReference type="InterPro" id="IPR002939">
    <property type="entry name" value="DnaJ_C"/>
</dbReference>
<dbReference type="InterPro" id="IPR001623">
    <property type="entry name" value="DnaJ_domain"/>
</dbReference>
<dbReference type="InterPro" id="IPR018253">
    <property type="entry name" value="DnaJ_domain_CS"/>
</dbReference>
<dbReference type="InterPro" id="IPR008971">
    <property type="entry name" value="HSP40/DnaJ_pept-bd"/>
</dbReference>
<dbReference type="InterPro" id="IPR036869">
    <property type="entry name" value="J_dom_sf"/>
</dbReference>
<dbReference type="NCBIfam" id="NF007618">
    <property type="entry name" value="PRK10266.1"/>
    <property type="match status" value="1"/>
</dbReference>
<dbReference type="PANTHER" id="PTHR43096">
    <property type="entry name" value="DNAJ HOMOLOG 1, MITOCHONDRIAL-RELATED"/>
    <property type="match status" value="1"/>
</dbReference>
<dbReference type="PANTHER" id="PTHR43096:SF52">
    <property type="entry name" value="DNAJ HOMOLOG 1, MITOCHONDRIAL-RELATED"/>
    <property type="match status" value="1"/>
</dbReference>
<dbReference type="Pfam" id="PF00226">
    <property type="entry name" value="DnaJ"/>
    <property type="match status" value="1"/>
</dbReference>
<dbReference type="Pfam" id="PF01556">
    <property type="entry name" value="DnaJ_C"/>
    <property type="match status" value="1"/>
</dbReference>
<dbReference type="PRINTS" id="PR00625">
    <property type="entry name" value="JDOMAIN"/>
</dbReference>
<dbReference type="SMART" id="SM00271">
    <property type="entry name" value="DnaJ"/>
    <property type="match status" value="1"/>
</dbReference>
<dbReference type="SUPFAM" id="SSF46565">
    <property type="entry name" value="Chaperone J-domain"/>
    <property type="match status" value="1"/>
</dbReference>
<dbReference type="SUPFAM" id="SSF49493">
    <property type="entry name" value="HSP40/DnaJ peptide-binding domain"/>
    <property type="match status" value="2"/>
</dbReference>
<dbReference type="PROSITE" id="PS00636">
    <property type="entry name" value="DNAJ_1"/>
    <property type="match status" value="1"/>
</dbReference>
<dbReference type="PROSITE" id="PS50076">
    <property type="entry name" value="DNAJ_2"/>
    <property type="match status" value="1"/>
</dbReference>
<protein>
    <recommendedName>
        <fullName evidence="1">Curved DNA-binding protein</fullName>
    </recommendedName>
</protein>
<organism>
    <name type="scientific">Salmonella enteritidis PT4 (strain P125109)</name>
    <dbReference type="NCBI Taxonomy" id="550537"/>
    <lineage>
        <taxon>Bacteria</taxon>
        <taxon>Pseudomonadati</taxon>
        <taxon>Pseudomonadota</taxon>
        <taxon>Gammaproteobacteria</taxon>
        <taxon>Enterobacterales</taxon>
        <taxon>Enterobacteriaceae</taxon>
        <taxon>Salmonella</taxon>
    </lineage>
</organism>
<keyword id="KW-0143">Chaperone</keyword>
<keyword id="KW-0963">Cytoplasm</keyword>
<keyword id="KW-0238">DNA-binding</keyword>
<proteinExistence type="inferred from homology"/>
<evidence type="ECO:0000255" key="1">
    <source>
        <dbReference type="HAMAP-Rule" id="MF_01154"/>
    </source>
</evidence>
<sequence length="306" mass="34693">MELKDYYAIMGVKPTDDLKTIKTAYRRLARKYHPDVSKEPDAEARFKEVAEAWEVLSDEQRRAEYDQLWQHRNDPQFNRQFQQHEGQPYNAEDFDDIFSSIFGQHGRHSHHRHAARGHDIEIEVAVFLEETLEEHQRTISYSVPVYNAFGLVEREIPKTLNVKIPAGVSNGQRIRLKGQGTPGENGGPNGDLWLVIHIAPHPLFDIVNQDLEVVLPLAPWEAALGAKVSVPTLKERILLTIPPGSQAGQRLRIKGKGLASKKHTGDLYAIIKIVMPPKPDEKTAALWQQLADAQSSFDPRQQWGKA</sequence>
<feature type="chain" id="PRO_1000137757" description="Curved DNA-binding protein">
    <location>
        <begin position="1"/>
        <end position="306"/>
    </location>
</feature>
<feature type="domain" description="J" evidence="1">
    <location>
        <begin position="5"/>
        <end position="69"/>
    </location>
</feature>